<keyword id="KW-0029">Amino-acid transport</keyword>
<keyword id="KW-0997">Cell inner membrane</keyword>
<keyword id="KW-1003">Cell membrane</keyword>
<keyword id="KW-0472">Membrane</keyword>
<keyword id="KW-0812">Transmembrane</keyword>
<keyword id="KW-1133">Transmembrane helix</keyword>
<keyword id="KW-0813">Transport</keyword>
<name>ARGO_SALPK</name>
<comment type="function">
    <text evidence="1">Involved in the export of arginine. Important to control the intracellular level of arginine and the correct balance between arginine and lysine.</text>
</comment>
<comment type="catalytic activity">
    <reaction evidence="1">
        <text>L-arginine(in) = L-arginine(out)</text>
        <dbReference type="Rhea" id="RHEA:32143"/>
        <dbReference type="ChEBI" id="CHEBI:32682"/>
    </reaction>
    <physiologicalReaction direction="left-to-right" evidence="1">
        <dbReference type="Rhea" id="RHEA:32144"/>
    </physiologicalReaction>
</comment>
<comment type="subcellular location">
    <subcellularLocation>
        <location evidence="1">Cell inner membrane</location>
        <topology evidence="1">Multi-pass membrane protein</topology>
    </subcellularLocation>
</comment>
<comment type="similarity">
    <text evidence="1">Belongs to the LysE/ArgO transporter (TC 2.A.75) family.</text>
</comment>
<dbReference type="EMBL" id="FM200053">
    <property type="protein sequence ID" value="CAR60977.1"/>
    <property type="molecule type" value="Genomic_DNA"/>
</dbReference>
<dbReference type="RefSeq" id="WP_000626872.1">
    <property type="nucleotide sequence ID" value="NC_011147.1"/>
</dbReference>
<dbReference type="KEGG" id="sek:SSPA2736"/>
<dbReference type="HOGENOM" id="CLU_087840_0_1_6"/>
<dbReference type="Proteomes" id="UP000001869">
    <property type="component" value="Chromosome"/>
</dbReference>
<dbReference type="GO" id="GO:0005886">
    <property type="term" value="C:plasma membrane"/>
    <property type="evidence" value="ECO:0007669"/>
    <property type="project" value="UniProtKB-SubCell"/>
</dbReference>
<dbReference type="GO" id="GO:0061459">
    <property type="term" value="F:L-arginine transmembrane transporter activity"/>
    <property type="evidence" value="ECO:0007669"/>
    <property type="project" value="UniProtKB-UniRule"/>
</dbReference>
<dbReference type="HAMAP" id="MF_01901">
    <property type="entry name" value="ArgO"/>
    <property type="match status" value="1"/>
</dbReference>
<dbReference type="InterPro" id="IPR023445">
    <property type="entry name" value="Arg_export_ArgO_enterobac"/>
</dbReference>
<dbReference type="InterPro" id="IPR001123">
    <property type="entry name" value="LeuE-type"/>
</dbReference>
<dbReference type="InterPro" id="IPR004777">
    <property type="entry name" value="Lys/arg_exporter"/>
</dbReference>
<dbReference type="NCBIfam" id="TIGR00948">
    <property type="entry name" value="2a75"/>
    <property type="match status" value="1"/>
</dbReference>
<dbReference type="NCBIfam" id="NF006801">
    <property type="entry name" value="PRK09304.1"/>
    <property type="match status" value="1"/>
</dbReference>
<dbReference type="PANTHER" id="PTHR30086">
    <property type="entry name" value="ARGININE EXPORTER PROTEIN ARGO"/>
    <property type="match status" value="1"/>
</dbReference>
<dbReference type="PANTHER" id="PTHR30086:SF20">
    <property type="entry name" value="ARGININE EXPORTER PROTEIN ARGO-RELATED"/>
    <property type="match status" value="1"/>
</dbReference>
<dbReference type="Pfam" id="PF01810">
    <property type="entry name" value="LysE"/>
    <property type="match status" value="1"/>
</dbReference>
<reference key="1">
    <citation type="journal article" date="2009" name="BMC Genomics">
        <title>Pseudogene accumulation in the evolutionary histories of Salmonella enterica serovars Paratyphi A and Typhi.</title>
        <authorList>
            <person name="Holt K.E."/>
            <person name="Thomson N.R."/>
            <person name="Wain J."/>
            <person name="Langridge G.C."/>
            <person name="Hasan R."/>
            <person name="Bhutta Z.A."/>
            <person name="Quail M.A."/>
            <person name="Norbertczak H."/>
            <person name="Walker D."/>
            <person name="Simmonds M."/>
            <person name="White B."/>
            <person name="Bason N."/>
            <person name="Mungall K."/>
            <person name="Dougan G."/>
            <person name="Parkhill J."/>
        </authorList>
    </citation>
    <scope>NUCLEOTIDE SEQUENCE [LARGE SCALE GENOMIC DNA]</scope>
    <source>
        <strain>AKU_12601</strain>
    </source>
</reference>
<organism>
    <name type="scientific">Salmonella paratyphi A (strain AKU_12601)</name>
    <dbReference type="NCBI Taxonomy" id="554290"/>
    <lineage>
        <taxon>Bacteria</taxon>
        <taxon>Pseudomonadati</taxon>
        <taxon>Pseudomonadota</taxon>
        <taxon>Gammaproteobacteria</taxon>
        <taxon>Enterobacterales</taxon>
        <taxon>Enterobacteriaceae</taxon>
        <taxon>Salmonella</taxon>
    </lineage>
</organism>
<sequence>MISYYFQGFALGVAMILPLGPQNAFVMNQGIRRQYHLMIALLCALSDLVLISAGIFGGSALLMQSPWLLALVTWGGVAFLLWYGFGALKTAMSSNLELASAEVMKQGRWKIIATMLAVTWLNPHVYLDTFVVLGSLGGQLAMEPKRWFALGTISASFLWFFGLALLAAWLAPRLRTAKAQRIINILVGVVMWLIAFQLAREGVAHMHALFN</sequence>
<accession>B5BFN1</accession>
<evidence type="ECO:0000255" key="1">
    <source>
        <dbReference type="HAMAP-Rule" id="MF_01901"/>
    </source>
</evidence>
<proteinExistence type="inferred from homology"/>
<feature type="chain" id="PRO_1000188724" description="Arginine exporter protein ArgO">
    <location>
        <begin position="1"/>
        <end position="211"/>
    </location>
</feature>
<feature type="transmembrane region" description="Helical" evidence="1">
    <location>
        <begin position="1"/>
        <end position="21"/>
    </location>
</feature>
<feature type="transmembrane region" description="Helical" evidence="1">
    <location>
        <begin position="37"/>
        <end position="57"/>
    </location>
</feature>
<feature type="transmembrane region" description="Helical" evidence="1">
    <location>
        <begin position="68"/>
        <end position="88"/>
    </location>
</feature>
<feature type="transmembrane region" description="Helical" evidence="1">
    <location>
        <begin position="111"/>
        <end position="131"/>
    </location>
</feature>
<feature type="transmembrane region" description="Helical" evidence="1">
    <location>
        <begin position="147"/>
        <end position="167"/>
    </location>
</feature>
<feature type="transmembrane region" description="Helical" evidence="1">
    <location>
        <begin position="179"/>
        <end position="199"/>
    </location>
</feature>
<protein>
    <recommendedName>
        <fullName evidence="1">Arginine exporter protein ArgO</fullName>
    </recommendedName>
</protein>
<gene>
    <name evidence="1" type="primary">argO</name>
    <name type="ordered locus">SSPA2736</name>
</gene>